<organism>
    <name type="scientific">Schizosaccharomyces pombe (strain 972 / ATCC 24843)</name>
    <name type="common">Fission yeast</name>
    <dbReference type="NCBI Taxonomy" id="284812"/>
    <lineage>
        <taxon>Eukaryota</taxon>
        <taxon>Fungi</taxon>
        <taxon>Dikarya</taxon>
        <taxon>Ascomycota</taxon>
        <taxon>Taphrinomycotina</taxon>
        <taxon>Schizosaccharomycetes</taxon>
        <taxon>Schizosaccharomycetales</taxon>
        <taxon>Schizosaccharomycetaceae</taxon>
        <taxon>Schizosaccharomyces</taxon>
    </lineage>
</organism>
<evidence type="ECO:0000255" key="1"/>
<evidence type="ECO:0000256" key="2">
    <source>
        <dbReference type="SAM" id="MobiDB-lite"/>
    </source>
</evidence>
<evidence type="ECO:0000305" key="3"/>
<protein>
    <recommendedName>
        <fullName>Uncharacterized protein C3H7.08c</fullName>
    </recommendedName>
</protein>
<feature type="chain" id="PRO_0000116862" description="Uncharacterized protein C3H7.08c">
    <location>
        <begin position="1"/>
        <end position="120"/>
    </location>
</feature>
<feature type="transmembrane region" description="Helical" evidence="1">
    <location>
        <begin position="19"/>
        <end position="41"/>
    </location>
</feature>
<feature type="region of interest" description="Disordered" evidence="2">
    <location>
        <begin position="57"/>
        <end position="78"/>
    </location>
</feature>
<feature type="compositionally biased region" description="Basic and acidic residues" evidence="2">
    <location>
        <begin position="61"/>
        <end position="75"/>
    </location>
</feature>
<name>YNV8_SCHPO</name>
<keyword id="KW-0472">Membrane</keyword>
<keyword id="KW-1185">Reference proteome</keyword>
<keyword id="KW-0812">Transmembrane</keyword>
<keyword id="KW-1133">Transmembrane helix</keyword>
<comment type="subcellular location">
    <subcellularLocation>
        <location evidence="3">Membrane</location>
        <topology evidence="3">Single-pass membrane protein</topology>
    </subcellularLocation>
</comment>
<sequence length="120" mass="13983">MSIMRSIMSNRLVRWSREYPELFITWCVMTYTFGVAGYMLGQRGLLVQHEDQVRIPSKNAHPWEDTKSSSGKSDESLDYSYKYYPRGDRSKEPRKAPSAIQYSTFPVKGVSEEVLERFSK</sequence>
<proteinExistence type="predicted"/>
<dbReference type="EMBL" id="CU329671">
    <property type="protein sequence ID" value="CAA20304.1"/>
    <property type="molecule type" value="Genomic_DNA"/>
</dbReference>
<dbReference type="PIR" id="T40407">
    <property type="entry name" value="T40407"/>
</dbReference>
<dbReference type="RefSeq" id="NP_595767.1">
    <property type="nucleotide sequence ID" value="NM_001021668.2"/>
</dbReference>
<dbReference type="BioGRID" id="277522">
    <property type="interactions" value="1"/>
</dbReference>
<dbReference type="PaxDb" id="4896-SPBC3H7.08c.1"/>
<dbReference type="EnsemblFungi" id="SPBC3H7.08c.1">
    <property type="protein sequence ID" value="SPBC3H7.08c.1:pep"/>
    <property type="gene ID" value="SPBC3H7.08c"/>
</dbReference>
<dbReference type="KEGG" id="spo:2541007"/>
<dbReference type="PomBase" id="SPBC3H7.08c"/>
<dbReference type="VEuPathDB" id="FungiDB:SPBC3H7.08c"/>
<dbReference type="eggNOG" id="ENOG502SD32">
    <property type="taxonomic scope" value="Eukaryota"/>
</dbReference>
<dbReference type="HOGENOM" id="CLU_2086165_0_0_1"/>
<dbReference type="InParanoid" id="O74383"/>
<dbReference type="OMA" id="PELFITW"/>
<dbReference type="PhylomeDB" id="O74383"/>
<dbReference type="PRO" id="PR:O74383"/>
<dbReference type="Proteomes" id="UP000002485">
    <property type="component" value="Chromosome II"/>
</dbReference>
<dbReference type="GO" id="GO:0016020">
    <property type="term" value="C:membrane"/>
    <property type="evidence" value="ECO:0007669"/>
    <property type="project" value="UniProtKB-SubCell"/>
</dbReference>
<dbReference type="GO" id="GO:0005739">
    <property type="term" value="C:mitochondrion"/>
    <property type="evidence" value="ECO:0007005"/>
    <property type="project" value="PomBase"/>
</dbReference>
<dbReference type="GO" id="GO:0033615">
    <property type="term" value="P:mitochondrial proton-transporting ATP synthase complex assembly"/>
    <property type="evidence" value="ECO:0000304"/>
    <property type="project" value="PomBase"/>
</dbReference>
<dbReference type="InterPro" id="IPR039965">
    <property type="entry name" value="C3H7.08c"/>
</dbReference>
<dbReference type="PANTHER" id="PTHR40466">
    <property type="entry name" value="EXPRESSED PROTEIN"/>
    <property type="match status" value="1"/>
</dbReference>
<dbReference type="PANTHER" id="PTHR40466:SF1">
    <property type="entry name" value="FUNGAL PROTEIN"/>
    <property type="match status" value="1"/>
</dbReference>
<reference key="1">
    <citation type="journal article" date="2002" name="Nature">
        <title>The genome sequence of Schizosaccharomyces pombe.</title>
        <authorList>
            <person name="Wood V."/>
            <person name="Gwilliam R."/>
            <person name="Rajandream M.A."/>
            <person name="Lyne M.H."/>
            <person name="Lyne R."/>
            <person name="Stewart A."/>
            <person name="Sgouros J.G."/>
            <person name="Peat N."/>
            <person name="Hayles J."/>
            <person name="Baker S.G."/>
            <person name="Basham D."/>
            <person name="Bowman S."/>
            <person name="Brooks K."/>
            <person name="Brown D."/>
            <person name="Brown S."/>
            <person name="Chillingworth T."/>
            <person name="Churcher C.M."/>
            <person name="Collins M."/>
            <person name="Connor R."/>
            <person name="Cronin A."/>
            <person name="Davis P."/>
            <person name="Feltwell T."/>
            <person name="Fraser A."/>
            <person name="Gentles S."/>
            <person name="Goble A."/>
            <person name="Hamlin N."/>
            <person name="Harris D.E."/>
            <person name="Hidalgo J."/>
            <person name="Hodgson G."/>
            <person name="Holroyd S."/>
            <person name="Hornsby T."/>
            <person name="Howarth S."/>
            <person name="Huckle E.J."/>
            <person name="Hunt S."/>
            <person name="Jagels K."/>
            <person name="James K.D."/>
            <person name="Jones L."/>
            <person name="Jones M."/>
            <person name="Leather S."/>
            <person name="McDonald S."/>
            <person name="McLean J."/>
            <person name="Mooney P."/>
            <person name="Moule S."/>
            <person name="Mungall K.L."/>
            <person name="Murphy L.D."/>
            <person name="Niblett D."/>
            <person name="Odell C."/>
            <person name="Oliver K."/>
            <person name="O'Neil S."/>
            <person name="Pearson D."/>
            <person name="Quail M.A."/>
            <person name="Rabbinowitsch E."/>
            <person name="Rutherford K.M."/>
            <person name="Rutter S."/>
            <person name="Saunders D."/>
            <person name="Seeger K."/>
            <person name="Sharp S."/>
            <person name="Skelton J."/>
            <person name="Simmonds M.N."/>
            <person name="Squares R."/>
            <person name="Squares S."/>
            <person name="Stevens K."/>
            <person name="Taylor K."/>
            <person name="Taylor R.G."/>
            <person name="Tivey A."/>
            <person name="Walsh S.V."/>
            <person name="Warren T."/>
            <person name="Whitehead S."/>
            <person name="Woodward J.R."/>
            <person name="Volckaert G."/>
            <person name="Aert R."/>
            <person name="Robben J."/>
            <person name="Grymonprez B."/>
            <person name="Weltjens I."/>
            <person name="Vanstreels E."/>
            <person name="Rieger M."/>
            <person name="Schaefer M."/>
            <person name="Mueller-Auer S."/>
            <person name="Gabel C."/>
            <person name="Fuchs M."/>
            <person name="Duesterhoeft A."/>
            <person name="Fritzc C."/>
            <person name="Holzer E."/>
            <person name="Moestl D."/>
            <person name="Hilbert H."/>
            <person name="Borzym K."/>
            <person name="Langer I."/>
            <person name="Beck A."/>
            <person name="Lehrach H."/>
            <person name="Reinhardt R."/>
            <person name="Pohl T.M."/>
            <person name="Eger P."/>
            <person name="Zimmermann W."/>
            <person name="Wedler H."/>
            <person name="Wambutt R."/>
            <person name="Purnelle B."/>
            <person name="Goffeau A."/>
            <person name="Cadieu E."/>
            <person name="Dreano S."/>
            <person name="Gloux S."/>
            <person name="Lelaure V."/>
            <person name="Mottier S."/>
            <person name="Galibert F."/>
            <person name="Aves S.J."/>
            <person name="Xiang Z."/>
            <person name="Hunt C."/>
            <person name="Moore K."/>
            <person name="Hurst S.M."/>
            <person name="Lucas M."/>
            <person name="Rochet M."/>
            <person name="Gaillardin C."/>
            <person name="Tallada V.A."/>
            <person name="Garzon A."/>
            <person name="Thode G."/>
            <person name="Daga R.R."/>
            <person name="Cruzado L."/>
            <person name="Jimenez J."/>
            <person name="Sanchez M."/>
            <person name="del Rey F."/>
            <person name="Benito J."/>
            <person name="Dominguez A."/>
            <person name="Revuelta J.L."/>
            <person name="Moreno S."/>
            <person name="Armstrong J."/>
            <person name="Forsburg S.L."/>
            <person name="Cerutti L."/>
            <person name="Lowe T."/>
            <person name="McCombie W.R."/>
            <person name="Paulsen I."/>
            <person name="Potashkin J."/>
            <person name="Shpakovski G.V."/>
            <person name="Ussery D."/>
            <person name="Barrell B.G."/>
            <person name="Nurse P."/>
        </authorList>
    </citation>
    <scope>NUCLEOTIDE SEQUENCE [LARGE SCALE GENOMIC DNA]</scope>
    <source>
        <strain>972 / ATCC 24843</strain>
    </source>
</reference>
<gene>
    <name type="ORF">SPBC3H7.08c</name>
</gene>
<accession>O74383</accession>